<protein>
    <recommendedName>
        <fullName evidence="2">Large ribosomal subunit protein bL20c</fullName>
    </recommendedName>
    <alternativeName>
        <fullName>50S ribosomal protein L20, chloroplastic</fullName>
    </alternativeName>
</protein>
<proteinExistence type="inferred from homology"/>
<accession>P0C447</accession>
<gene>
    <name type="primary">rpl20</name>
</gene>
<evidence type="ECO:0000250" key="1"/>
<evidence type="ECO:0000305" key="2"/>
<organism>
    <name type="scientific">Oryza sativa</name>
    <name type="common">Rice</name>
    <dbReference type="NCBI Taxonomy" id="4530"/>
    <lineage>
        <taxon>Eukaryota</taxon>
        <taxon>Viridiplantae</taxon>
        <taxon>Streptophyta</taxon>
        <taxon>Embryophyta</taxon>
        <taxon>Tracheophyta</taxon>
        <taxon>Spermatophyta</taxon>
        <taxon>Magnoliopsida</taxon>
        <taxon>Liliopsida</taxon>
        <taxon>Poales</taxon>
        <taxon>Poaceae</taxon>
        <taxon>BOP clade</taxon>
        <taxon>Oryzoideae</taxon>
        <taxon>Oryzeae</taxon>
        <taxon>Oryzinae</taxon>
        <taxon>Oryza</taxon>
    </lineage>
</organism>
<keyword id="KW-0150">Chloroplast</keyword>
<keyword id="KW-0934">Plastid</keyword>
<keyword id="KW-0687">Ribonucleoprotein</keyword>
<keyword id="KW-0689">Ribosomal protein</keyword>
<keyword id="KW-0694">RNA-binding</keyword>
<keyword id="KW-0699">rRNA-binding</keyword>
<geneLocation type="chloroplast"/>
<reference key="1">
    <citation type="journal article" date="2004" name="Plant Physiol.">
        <title>A comparison of rice chloroplast genomes.</title>
        <authorList>
            <person name="Tang J."/>
            <person name="Xia H."/>
            <person name="Cao M."/>
            <person name="Zhang X."/>
            <person name="Zeng W."/>
            <person name="Hu S."/>
            <person name="Tong W."/>
            <person name="Wang J."/>
            <person name="Wang J."/>
            <person name="Yu J."/>
            <person name="Yang H."/>
            <person name="Zhu L."/>
        </authorList>
    </citation>
    <scope>NUCLEOTIDE SEQUENCE [LARGE SCALE GENOMIC DNA]</scope>
    <source>
        <strain>cv. PA64s</strain>
    </source>
</reference>
<dbReference type="EMBL" id="AY522331">
    <property type="status" value="NOT_ANNOTATED_CDS"/>
    <property type="molecule type" value="Genomic_DNA"/>
</dbReference>
<dbReference type="SMR" id="P0C447"/>
<dbReference type="GO" id="GO:0009507">
    <property type="term" value="C:chloroplast"/>
    <property type="evidence" value="ECO:0007669"/>
    <property type="project" value="UniProtKB-SubCell"/>
</dbReference>
<dbReference type="GO" id="GO:0009536">
    <property type="term" value="C:plastid"/>
    <property type="evidence" value="ECO:0000305"/>
    <property type="project" value="Gramene"/>
</dbReference>
<dbReference type="GO" id="GO:1990904">
    <property type="term" value="C:ribonucleoprotein complex"/>
    <property type="evidence" value="ECO:0007669"/>
    <property type="project" value="UniProtKB-KW"/>
</dbReference>
<dbReference type="GO" id="GO:0005840">
    <property type="term" value="C:ribosome"/>
    <property type="evidence" value="ECO:0007669"/>
    <property type="project" value="UniProtKB-KW"/>
</dbReference>
<dbReference type="GO" id="GO:0019843">
    <property type="term" value="F:rRNA binding"/>
    <property type="evidence" value="ECO:0007669"/>
    <property type="project" value="UniProtKB-UniRule"/>
</dbReference>
<dbReference type="GO" id="GO:0003735">
    <property type="term" value="F:structural constituent of ribosome"/>
    <property type="evidence" value="ECO:0007669"/>
    <property type="project" value="InterPro"/>
</dbReference>
<dbReference type="GO" id="GO:0000027">
    <property type="term" value="P:ribosomal large subunit assembly"/>
    <property type="evidence" value="ECO:0007669"/>
    <property type="project" value="UniProtKB-UniRule"/>
</dbReference>
<dbReference type="GO" id="GO:0006412">
    <property type="term" value="P:translation"/>
    <property type="evidence" value="ECO:0007669"/>
    <property type="project" value="InterPro"/>
</dbReference>
<dbReference type="CDD" id="cd07026">
    <property type="entry name" value="Ribosomal_L20"/>
    <property type="match status" value="1"/>
</dbReference>
<dbReference type="FunFam" id="1.10.1900.20:FF:000002">
    <property type="entry name" value="50S ribosomal protein L20, chloroplastic"/>
    <property type="match status" value="1"/>
</dbReference>
<dbReference type="Gene3D" id="6.10.160.10">
    <property type="match status" value="1"/>
</dbReference>
<dbReference type="Gene3D" id="1.10.1900.20">
    <property type="entry name" value="Ribosomal protein L20"/>
    <property type="match status" value="1"/>
</dbReference>
<dbReference type="HAMAP" id="MF_00382">
    <property type="entry name" value="Ribosomal_bL20"/>
    <property type="match status" value="1"/>
</dbReference>
<dbReference type="InterPro" id="IPR005813">
    <property type="entry name" value="Ribosomal_bL20"/>
</dbReference>
<dbReference type="InterPro" id="IPR049946">
    <property type="entry name" value="RIBOSOMAL_L20_CS"/>
</dbReference>
<dbReference type="InterPro" id="IPR035566">
    <property type="entry name" value="Ribosomal_protein_bL20_C"/>
</dbReference>
<dbReference type="NCBIfam" id="TIGR01032">
    <property type="entry name" value="rplT_bact"/>
    <property type="match status" value="1"/>
</dbReference>
<dbReference type="PANTHER" id="PTHR10986">
    <property type="entry name" value="39S RIBOSOMAL PROTEIN L20"/>
    <property type="match status" value="1"/>
</dbReference>
<dbReference type="Pfam" id="PF00453">
    <property type="entry name" value="Ribosomal_L20"/>
    <property type="match status" value="1"/>
</dbReference>
<dbReference type="PRINTS" id="PR00062">
    <property type="entry name" value="RIBOSOMALL20"/>
</dbReference>
<dbReference type="SUPFAM" id="SSF74731">
    <property type="entry name" value="Ribosomal protein L20"/>
    <property type="match status" value="1"/>
</dbReference>
<dbReference type="PROSITE" id="PS00937">
    <property type="entry name" value="RIBOSOMAL_L20"/>
    <property type="match status" value="1"/>
</dbReference>
<feature type="initiator methionine" description="Removed" evidence="1">
    <location>
        <position position="1"/>
    </location>
</feature>
<feature type="chain" id="PRO_0000290045" description="Large ribosomal subunit protein bL20c">
    <location>
        <begin position="2"/>
        <end position="119"/>
    </location>
</feature>
<sequence length="119" mass="14346">MTRVPRGYIARRRRAKMRSFASNFRGAHLRLNRMITQQVRRAFVSSHRDRVRQKRDFRRLWISRINAATRIHKVFDNYSKLIHNLYKKELILNRKILAQVAVLNSNNLYTISNKIKIIN</sequence>
<name>RK20_ORYSA</name>
<comment type="function">
    <text evidence="1">Binds directly to 23S ribosomal RNA and is necessary for the in vitro assembly process of the 50S ribosomal subunit. It is not involved in the protein synthesizing functions of that subunit (By similarity).</text>
</comment>
<comment type="subcellular location">
    <subcellularLocation>
        <location>Plastid</location>
        <location>Chloroplast</location>
    </subcellularLocation>
</comment>
<comment type="similarity">
    <text evidence="2">Belongs to the bacterial ribosomal protein bL20 family.</text>
</comment>